<keyword id="KW-0119">Carbohydrate metabolism</keyword>
<keyword id="KW-0448">Lipopolysaccharide biosynthesis</keyword>
<keyword id="KW-0460">Magnesium</keyword>
<keyword id="KW-0479">Metal-binding</keyword>
<keyword id="KW-0520">NAD</keyword>
<keyword id="KW-0521">NADP</keyword>
<keyword id="KW-0560">Oxidoreductase</keyword>
<protein>
    <recommendedName>
        <fullName evidence="1">dTDP-4-dehydrorhamnose reductase</fullName>
        <ecNumber evidence="2">1.1.1.133</ecNumber>
    </recommendedName>
    <alternativeName>
        <fullName evidence="1">dTDP-4-keto-L-rhamnose reductase</fullName>
    </alternativeName>
    <alternativeName>
        <fullName evidence="3">dTDP-6-deoxy-L-lyxo-4-hexulose reductase</fullName>
    </alternativeName>
    <alternativeName>
        <fullName evidence="1">dTDP-6-deoxy-L-mannose dehydrogenase</fullName>
    </alternativeName>
    <alternativeName>
        <fullName evidence="1">dTDP-L-rhamnose synthase</fullName>
    </alternativeName>
</protein>
<name>RMLD_AGGAC</name>
<feature type="chain" id="PRO_0000424093" description="dTDP-4-dehydrorhamnose reductase">
    <location>
        <begin position="1"/>
        <end position="294"/>
    </location>
</feature>
<feature type="active site" description="Proton donor/acceptor" evidence="1">
    <location>
        <position position="127"/>
    </location>
</feature>
<feature type="binding site" evidence="1">
    <location>
        <begin position="11"/>
        <end position="13"/>
    </location>
    <ligand>
        <name>NADH</name>
        <dbReference type="ChEBI" id="CHEBI:57945"/>
    </ligand>
</feature>
<feature type="binding site" evidence="1">
    <location>
        <begin position="12"/>
        <end position="13"/>
    </location>
    <ligand>
        <name>NADPH</name>
        <dbReference type="ChEBI" id="CHEBI:57783"/>
    </ligand>
</feature>
<feature type="binding site" evidence="1">
    <location>
        <begin position="38"/>
        <end position="39"/>
    </location>
    <ligand>
        <name>NADH</name>
        <dbReference type="ChEBI" id="CHEBI:57945"/>
    </ligand>
</feature>
<feature type="binding site" evidence="1">
    <location>
        <begin position="38"/>
        <end position="39"/>
    </location>
    <ligand>
        <name>NADPH</name>
        <dbReference type="ChEBI" id="CHEBI:57783"/>
    </ligand>
</feature>
<feature type="binding site" evidence="1">
    <location>
        <begin position="62"/>
        <end position="64"/>
    </location>
    <ligand>
        <name>NADH</name>
        <dbReference type="ChEBI" id="CHEBI:57945"/>
    </ligand>
</feature>
<feature type="binding site" evidence="1">
    <location>
        <begin position="62"/>
        <end position="64"/>
    </location>
    <ligand>
        <name>NADPH</name>
        <dbReference type="ChEBI" id="CHEBI:57783"/>
    </ligand>
</feature>
<feature type="binding site" evidence="1">
    <location>
        <begin position="103"/>
        <end position="104"/>
    </location>
    <ligand>
        <name>dTDP-beta-L-rhamnose</name>
        <dbReference type="ChEBI" id="CHEBI:57510"/>
    </ligand>
</feature>
<feature type="binding site" evidence="1">
    <location>
        <position position="127"/>
    </location>
    <ligand>
        <name>NADH</name>
        <dbReference type="ChEBI" id="CHEBI:57945"/>
    </ligand>
</feature>
<feature type="binding site" evidence="1">
    <location>
        <position position="127"/>
    </location>
    <ligand>
        <name>NADPH</name>
        <dbReference type="ChEBI" id="CHEBI:57783"/>
    </ligand>
</feature>
<feature type="binding site" evidence="1">
    <location>
        <position position="131"/>
    </location>
    <ligand>
        <name>NADH</name>
        <dbReference type="ChEBI" id="CHEBI:57945"/>
    </ligand>
</feature>
<feature type="binding site" evidence="1">
    <location>
        <position position="131"/>
    </location>
    <ligand>
        <name>NADPH</name>
        <dbReference type="ChEBI" id="CHEBI:57783"/>
    </ligand>
</feature>
<feature type="binding site" evidence="1">
    <location>
        <position position="152"/>
    </location>
    <ligand>
        <name>dTDP-beta-L-rhamnose</name>
        <dbReference type="ChEBI" id="CHEBI:57510"/>
    </ligand>
</feature>
<feature type="site" description="Could provide a fine-tuning to achieve optimal pKa matching between active site and substrate" evidence="1">
    <location>
        <position position="103"/>
    </location>
</feature>
<evidence type="ECO:0000250" key="1">
    <source>
        <dbReference type="UniProtKB" id="P26392"/>
    </source>
</evidence>
<evidence type="ECO:0000269" key="2">
    <source>
    </source>
</evidence>
<evidence type="ECO:0000303" key="3">
    <source>
    </source>
</evidence>
<evidence type="ECO:0000303" key="4">
    <source>
    </source>
</evidence>
<evidence type="ECO:0000305" key="5"/>
<gene>
    <name evidence="4" type="primary">rmlD</name>
</gene>
<reference key="1">
    <citation type="journal article" date="1998" name="Biochim. Biophys. Acta">
        <title>A gene cluster for 6-deoxy-L-talan synthesis in Actinobacillus actinomycetemcomitans.</title>
        <authorList>
            <person name="Nakano Y."/>
            <person name="Yoshida Y."/>
            <person name="Yamashita Y."/>
            <person name="Koga T."/>
        </authorList>
    </citation>
    <scope>NUCLEOTIDE SEQUENCE [GENOMIC DNA]</scope>
    <source>
        <strain>ATCC 33384 / DSM 8324 / CCUG 13227 / NCTC 9710 / Serotype c</strain>
    </source>
</reference>
<reference key="2">
    <citation type="journal article" date="2000" name="J. Biol. Chem.">
        <title>Thymidine diphosphate-6-deoxy-L-lyxo-4-hexulose reductase synthesizing dTDP-6-deoxy-L-talose from Actinobacillus actinomycetemcomitans.</title>
        <authorList>
            <person name="Nakano Y."/>
            <person name="Suzuki N."/>
            <person name="Yoshida Y."/>
            <person name="Nezu T."/>
            <person name="Yamashita Y."/>
            <person name="Koga T."/>
        </authorList>
    </citation>
    <scope>FUNCTION</scope>
    <scope>CATALYTIC ACTIVITY</scope>
    <scope>PATHWAY</scope>
    <source>
        <strain>ATCC 33384 / DSM 8324 / CCUG 13227 / NCTC 9710 / Serotype c</strain>
    </source>
</reference>
<comment type="function">
    <text evidence="2">Involved in the biosynthesis of the dTDP-L-rhamnose which is an important component of lipopolysaccharide (LPS). Catalyzes the reduction of dTDP-6-deoxy-L-lyxo-4-hexulose to yield dTDP-L-rhamnose.</text>
</comment>
<comment type="catalytic activity">
    <reaction evidence="2">
        <text>dTDP-beta-L-rhamnose + NADP(+) = dTDP-4-dehydro-beta-L-rhamnose + NADPH + H(+)</text>
        <dbReference type="Rhea" id="RHEA:21796"/>
        <dbReference type="ChEBI" id="CHEBI:15378"/>
        <dbReference type="ChEBI" id="CHEBI:57510"/>
        <dbReference type="ChEBI" id="CHEBI:57783"/>
        <dbReference type="ChEBI" id="CHEBI:58349"/>
        <dbReference type="ChEBI" id="CHEBI:62830"/>
        <dbReference type="EC" id="1.1.1.133"/>
    </reaction>
</comment>
<comment type="cofactor">
    <cofactor evidence="1">
        <name>Mg(2+)</name>
        <dbReference type="ChEBI" id="CHEBI:18420"/>
    </cofactor>
    <text evidence="1">Binds 1 Mg(2+) ion per monomer.</text>
</comment>
<comment type="pathway">
    <text evidence="2">Carbohydrate biosynthesis; dTDP-L-rhamnose biosynthesis.</text>
</comment>
<comment type="pathway">
    <text evidence="2">Bacterial outer membrane biogenesis; LPS O-antigen biosynthesis.</text>
</comment>
<comment type="subunit">
    <text evidence="1">Homodimer.</text>
</comment>
<comment type="similarity">
    <text evidence="5">Belongs to the dTDP-4-dehydrorhamnose reductase family.</text>
</comment>
<organism>
    <name type="scientific">Aggregatibacter actinomycetemcomitans</name>
    <name type="common">Actinobacillus actinomycetemcomitans</name>
    <name type="synonym">Haemophilus actinomycetemcomitans</name>
    <dbReference type="NCBI Taxonomy" id="714"/>
    <lineage>
        <taxon>Bacteria</taxon>
        <taxon>Pseudomonadati</taxon>
        <taxon>Pseudomonadota</taxon>
        <taxon>Gammaproteobacteria</taxon>
        <taxon>Pasteurellales</taxon>
        <taxon>Pasteurellaceae</taxon>
        <taxon>Aggregatibacter</taxon>
    </lineage>
</organism>
<proteinExistence type="evidence at protein level"/>
<accession>O66251</accession>
<sequence length="294" mass="32356">MARLLITGAGGQLGRSLAKLLVDNGRYEVLALDFSELDITNKDMVFSIIDSFKPNVIINAAAYTSVDQAELEVSSAYSVNVRGVQYLAEAAIRHNSAILHVSTDYVFDGYKSGKYKETDIIHPLCVYGKSKAEGERLLLTLSPKSIILRTSWTFGEYGNNFVKTMLRLAKNRDILGVVADQIGGPTYSGDIASVLIQIAEKIIVGETVKYGIYHFTGEPCVSWYDFAIAIFDEAVAQKVLENVPLVNAITTADYPTLAKRPANSCLDLTKIQQAFGIQPSDWQRALKNIRAYAE</sequence>
<dbReference type="EC" id="1.1.1.133" evidence="2"/>
<dbReference type="EMBL" id="AB010415">
    <property type="protein sequence ID" value="BAA28133.1"/>
    <property type="molecule type" value="Genomic_DNA"/>
</dbReference>
<dbReference type="PIR" id="T00104">
    <property type="entry name" value="T00104"/>
</dbReference>
<dbReference type="SMR" id="O66251"/>
<dbReference type="BioCyc" id="MetaCyc:MONOMER-18135"/>
<dbReference type="UniPathway" id="UPA00124"/>
<dbReference type="UniPathway" id="UPA00281"/>
<dbReference type="GO" id="GO:0005829">
    <property type="term" value="C:cytosol"/>
    <property type="evidence" value="ECO:0007669"/>
    <property type="project" value="TreeGrafter"/>
</dbReference>
<dbReference type="GO" id="GO:0008831">
    <property type="term" value="F:dTDP-4-dehydrorhamnose reductase activity"/>
    <property type="evidence" value="ECO:0007669"/>
    <property type="project" value="UniProtKB-EC"/>
</dbReference>
<dbReference type="GO" id="GO:0046872">
    <property type="term" value="F:metal ion binding"/>
    <property type="evidence" value="ECO:0007669"/>
    <property type="project" value="UniProtKB-KW"/>
</dbReference>
<dbReference type="GO" id="GO:0019305">
    <property type="term" value="P:dTDP-rhamnose biosynthetic process"/>
    <property type="evidence" value="ECO:0007669"/>
    <property type="project" value="UniProtKB-UniPathway"/>
</dbReference>
<dbReference type="GO" id="GO:0009243">
    <property type="term" value="P:O antigen biosynthetic process"/>
    <property type="evidence" value="ECO:0007669"/>
    <property type="project" value="UniProtKB-UniPathway"/>
</dbReference>
<dbReference type="CDD" id="cd05254">
    <property type="entry name" value="dTDP_HR_like_SDR_e"/>
    <property type="match status" value="1"/>
</dbReference>
<dbReference type="Gene3D" id="3.40.50.720">
    <property type="entry name" value="NAD(P)-binding Rossmann-like Domain"/>
    <property type="match status" value="1"/>
</dbReference>
<dbReference type="Gene3D" id="3.90.25.10">
    <property type="entry name" value="UDP-galactose 4-epimerase, domain 1"/>
    <property type="match status" value="1"/>
</dbReference>
<dbReference type="InterPro" id="IPR005913">
    <property type="entry name" value="dTDP_dehydrorham_reduct"/>
</dbReference>
<dbReference type="InterPro" id="IPR036291">
    <property type="entry name" value="NAD(P)-bd_dom_sf"/>
</dbReference>
<dbReference type="InterPro" id="IPR029903">
    <property type="entry name" value="RmlD-like-bd"/>
</dbReference>
<dbReference type="NCBIfam" id="TIGR01214">
    <property type="entry name" value="rmlD"/>
    <property type="match status" value="1"/>
</dbReference>
<dbReference type="PANTHER" id="PTHR10491">
    <property type="entry name" value="DTDP-4-DEHYDRORHAMNOSE REDUCTASE"/>
    <property type="match status" value="1"/>
</dbReference>
<dbReference type="PANTHER" id="PTHR10491:SF4">
    <property type="entry name" value="METHIONINE ADENOSYLTRANSFERASE 2 SUBUNIT BETA"/>
    <property type="match status" value="1"/>
</dbReference>
<dbReference type="Pfam" id="PF04321">
    <property type="entry name" value="RmlD_sub_bind"/>
    <property type="match status" value="1"/>
</dbReference>
<dbReference type="SUPFAM" id="SSF51735">
    <property type="entry name" value="NAD(P)-binding Rossmann-fold domains"/>
    <property type="match status" value="1"/>
</dbReference>